<name>RS19_YERPE</name>
<sequence length="92" mass="10430">MPRSLKKGPFIDLHLLKKVEKAVESGDKKPIRTWSRRSTVFPNMIGLTIAVHNGRQHVPVFVSDEMVGHKLGEFAPTRTYRGHAADKKAKKR</sequence>
<accession>Q8ZJA8</accession>
<accession>Q0WK94</accession>
<gene>
    <name evidence="1" type="primary">rpsS</name>
    <name type="ordered locus">YPO0214</name>
    <name type="ordered locus">y3993.1</name>
    <name type="ordered locus">YP_0211</name>
</gene>
<keyword id="KW-1185">Reference proteome</keyword>
<keyword id="KW-0687">Ribonucleoprotein</keyword>
<keyword id="KW-0689">Ribosomal protein</keyword>
<keyword id="KW-0694">RNA-binding</keyword>
<keyword id="KW-0699">rRNA-binding</keyword>
<feature type="chain" id="PRO_0000129947" description="Small ribosomal subunit protein uS19">
    <location>
        <begin position="1"/>
        <end position="92"/>
    </location>
</feature>
<organism>
    <name type="scientific">Yersinia pestis</name>
    <dbReference type="NCBI Taxonomy" id="632"/>
    <lineage>
        <taxon>Bacteria</taxon>
        <taxon>Pseudomonadati</taxon>
        <taxon>Pseudomonadota</taxon>
        <taxon>Gammaproteobacteria</taxon>
        <taxon>Enterobacterales</taxon>
        <taxon>Yersiniaceae</taxon>
        <taxon>Yersinia</taxon>
    </lineage>
</organism>
<dbReference type="EMBL" id="AL590842">
    <property type="protein sequence ID" value="CAL18896.1"/>
    <property type="molecule type" value="Genomic_DNA"/>
</dbReference>
<dbReference type="EMBL" id="AE009952">
    <property type="status" value="NOT_ANNOTATED_CDS"/>
    <property type="molecule type" value="Genomic_DNA"/>
</dbReference>
<dbReference type="EMBL" id="AE017042">
    <property type="protein sequence ID" value="AAS60487.1"/>
    <property type="molecule type" value="Genomic_DNA"/>
</dbReference>
<dbReference type="PIR" id="AF0026">
    <property type="entry name" value="AF0026"/>
</dbReference>
<dbReference type="RefSeq" id="WP_002213430.1">
    <property type="nucleotide sequence ID" value="NZ_WUCM01000078.1"/>
</dbReference>
<dbReference type="RefSeq" id="YP_002345294.1">
    <property type="nucleotide sequence ID" value="NC_003143.1"/>
</dbReference>
<dbReference type="SMR" id="Q8ZJA8"/>
<dbReference type="STRING" id="214092.YPO0214"/>
<dbReference type="PaxDb" id="214092-YPO0214"/>
<dbReference type="EnsemblBacteria" id="AAS60487">
    <property type="protein sequence ID" value="AAS60487"/>
    <property type="gene ID" value="YP_0211"/>
</dbReference>
<dbReference type="GeneID" id="97454235"/>
<dbReference type="KEGG" id="ype:YPO0214"/>
<dbReference type="KEGG" id="ypm:YP_0211"/>
<dbReference type="PATRIC" id="fig|214092.21.peg.443"/>
<dbReference type="eggNOG" id="COG0185">
    <property type="taxonomic scope" value="Bacteria"/>
</dbReference>
<dbReference type="HOGENOM" id="CLU_144911_0_1_6"/>
<dbReference type="OMA" id="KGPFVDP"/>
<dbReference type="OrthoDB" id="9797833at2"/>
<dbReference type="Proteomes" id="UP000000815">
    <property type="component" value="Chromosome"/>
</dbReference>
<dbReference type="Proteomes" id="UP000001019">
    <property type="component" value="Chromosome"/>
</dbReference>
<dbReference type="Proteomes" id="UP000002490">
    <property type="component" value="Chromosome"/>
</dbReference>
<dbReference type="GO" id="GO:0005737">
    <property type="term" value="C:cytoplasm"/>
    <property type="evidence" value="ECO:0007669"/>
    <property type="project" value="UniProtKB-ARBA"/>
</dbReference>
<dbReference type="GO" id="GO:0015935">
    <property type="term" value="C:small ribosomal subunit"/>
    <property type="evidence" value="ECO:0007669"/>
    <property type="project" value="InterPro"/>
</dbReference>
<dbReference type="GO" id="GO:0019843">
    <property type="term" value="F:rRNA binding"/>
    <property type="evidence" value="ECO:0007669"/>
    <property type="project" value="UniProtKB-UniRule"/>
</dbReference>
<dbReference type="GO" id="GO:0003735">
    <property type="term" value="F:structural constituent of ribosome"/>
    <property type="evidence" value="ECO:0000318"/>
    <property type="project" value="GO_Central"/>
</dbReference>
<dbReference type="GO" id="GO:0000028">
    <property type="term" value="P:ribosomal small subunit assembly"/>
    <property type="evidence" value="ECO:0000318"/>
    <property type="project" value="GO_Central"/>
</dbReference>
<dbReference type="GO" id="GO:0006412">
    <property type="term" value="P:translation"/>
    <property type="evidence" value="ECO:0007669"/>
    <property type="project" value="UniProtKB-UniRule"/>
</dbReference>
<dbReference type="FunFam" id="3.30.860.10:FF:000001">
    <property type="entry name" value="30S ribosomal protein S19"/>
    <property type="match status" value="1"/>
</dbReference>
<dbReference type="Gene3D" id="3.30.860.10">
    <property type="entry name" value="30s Ribosomal Protein S19, Chain A"/>
    <property type="match status" value="1"/>
</dbReference>
<dbReference type="HAMAP" id="MF_00531">
    <property type="entry name" value="Ribosomal_uS19"/>
    <property type="match status" value="1"/>
</dbReference>
<dbReference type="InterPro" id="IPR002222">
    <property type="entry name" value="Ribosomal_uS19"/>
</dbReference>
<dbReference type="InterPro" id="IPR005732">
    <property type="entry name" value="Ribosomal_uS19_bac-type"/>
</dbReference>
<dbReference type="InterPro" id="IPR020934">
    <property type="entry name" value="Ribosomal_uS19_CS"/>
</dbReference>
<dbReference type="InterPro" id="IPR023575">
    <property type="entry name" value="Ribosomal_uS19_SF"/>
</dbReference>
<dbReference type="NCBIfam" id="TIGR01050">
    <property type="entry name" value="rpsS_bact"/>
    <property type="match status" value="1"/>
</dbReference>
<dbReference type="PANTHER" id="PTHR11880">
    <property type="entry name" value="RIBOSOMAL PROTEIN S19P FAMILY MEMBER"/>
    <property type="match status" value="1"/>
</dbReference>
<dbReference type="PANTHER" id="PTHR11880:SF8">
    <property type="entry name" value="SMALL RIBOSOMAL SUBUNIT PROTEIN US19M"/>
    <property type="match status" value="1"/>
</dbReference>
<dbReference type="Pfam" id="PF00203">
    <property type="entry name" value="Ribosomal_S19"/>
    <property type="match status" value="1"/>
</dbReference>
<dbReference type="PIRSF" id="PIRSF002144">
    <property type="entry name" value="Ribosomal_S19"/>
    <property type="match status" value="1"/>
</dbReference>
<dbReference type="PRINTS" id="PR00975">
    <property type="entry name" value="RIBOSOMALS19"/>
</dbReference>
<dbReference type="SUPFAM" id="SSF54570">
    <property type="entry name" value="Ribosomal protein S19"/>
    <property type="match status" value="1"/>
</dbReference>
<dbReference type="PROSITE" id="PS00323">
    <property type="entry name" value="RIBOSOMAL_S19"/>
    <property type="match status" value="1"/>
</dbReference>
<comment type="function">
    <text evidence="1">Protein S19 forms a complex with S13 that binds strongly to the 16S ribosomal RNA.</text>
</comment>
<comment type="similarity">
    <text evidence="1">Belongs to the universal ribosomal protein uS19 family.</text>
</comment>
<evidence type="ECO:0000255" key="1">
    <source>
        <dbReference type="HAMAP-Rule" id="MF_00531"/>
    </source>
</evidence>
<evidence type="ECO:0000305" key="2"/>
<reference key="1">
    <citation type="journal article" date="2001" name="Nature">
        <title>Genome sequence of Yersinia pestis, the causative agent of plague.</title>
        <authorList>
            <person name="Parkhill J."/>
            <person name="Wren B.W."/>
            <person name="Thomson N.R."/>
            <person name="Titball R.W."/>
            <person name="Holden M.T.G."/>
            <person name="Prentice M.B."/>
            <person name="Sebaihia M."/>
            <person name="James K.D."/>
            <person name="Churcher C.M."/>
            <person name="Mungall K.L."/>
            <person name="Baker S."/>
            <person name="Basham D."/>
            <person name="Bentley S.D."/>
            <person name="Brooks K."/>
            <person name="Cerdeno-Tarraga A.-M."/>
            <person name="Chillingworth T."/>
            <person name="Cronin A."/>
            <person name="Davies R.M."/>
            <person name="Davis P."/>
            <person name="Dougan G."/>
            <person name="Feltwell T."/>
            <person name="Hamlin N."/>
            <person name="Holroyd S."/>
            <person name="Jagels K."/>
            <person name="Karlyshev A.V."/>
            <person name="Leather S."/>
            <person name="Moule S."/>
            <person name="Oyston P.C.F."/>
            <person name="Quail M.A."/>
            <person name="Rutherford K.M."/>
            <person name="Simmonds M."/>
            <person name="Skelton J."/>
            <person name="Stevens K."/>
            <person name="Whitehead S."/>
            <person name="Barrell B.G."/>
        </authorList>
    </citation>
    <scope>NUCLEOTIDE SEQUENCE [LARGE SCALE GENOMIC DNA]</scope>
    <source>
        <strain>CO-92 / Biovar Orientalis</strain>
    </source>
</reference>
<reference key="2">
    <citation type="journal article" date="2002" name="J. Bacteriol.">
        <title>Genome sequence of Yersinia pestis KIM.</title>
        <authorList>
            <person name="Deng W."/>
            <person name="Burland V."/>
            <person name="Plunkett G. III"/>
            <person name="Boutin A."/>
            <person name="Mayhew G.F."/>
            <person name="Liss P."/>
            <person name="Perna N.T."/>
            <person name="Rose D.J."/>
            <person name="Mau B."/>
            <person name="Zhou S."/>
            <person name="Schwartz D.C."/>
            <person name="Fetherston J.D."/>
            <person name="Lindler L.E."/>
            <person name="Brubaker R.R."/>
            <person name="Plano G.V."/>
            <person name="Straley S.C."/>
            <person name="McDonough K.A."/>
            <person name="Nilles M.L."/>
            <person name="Matson J.S."/>
            <person name="Blattner F.R."/>
            <person name="Perry R.D."/>
        </authorList>
    </citation>
    <scope>NUCLEOTIDE SEQUENCE [LARGE SCALE GENOMIC DNA]</scope>
    <source>
        <strain>KIM10+ / Biovar Mediaevalis</strain>
    </source>
</reference>
<reference key="3">
    <citation type="journal article" date="2004" name="DNA Res.">
        <title>Complete genome sequence of Yersinia pestis strain 91001, an isolate avirulent to humans.</title>
        <authorList>
            <person name="Song Y."/>
            <person name="Tong Z."/>
            <person name="Wang J."/>
            <person name="Wang L."/>
            <person name="Guo Z."/>
            <person name="Han Y."/>
            <person name="Zhang J."/>
            <person name="Pei D."/>
            <person name="Zhou D."/>
            <person name="Qin H."/>
            <person name="Pang X."/>
            <person name="Han Y."/>
            <person name="Zhai J."/>
            <person name="Li M."/>
            <person name="Cui B."/>
            <person name="Qi Z."/>
            <person name="Jin L."/>
            <person name="Dai R."/>
            <person name="Chen F."/>
            <person name="Li S."/>
            <person name="Ye C."/>
            <person name="Du Z."/>
            <person name="Lin W."/>
            <person name="Wang J."/>
            <person name="Yu J."/>
            <person name="Yang H."/>
            <person name="Wang J."/>
            <person name="Huang P."/>
            <person name="Yang R."/>
        </authorList>
    </citation>
    <scope>NUCLEOTIDE SEQUENCE [LARGE SCALE GENOMIC DNA]</scope>
    <source>
        <strain>91001 / Biovar Mediaevalis</strain>
    </source>
</reference>
<proteinExistence type="inferred from homology"/>
<protein>
    <recommendedName>
        <fullName evidence="1">Small ribosomal subunit protein uS19</fullName>
    </recommendedName>
    <alternativeName>
        <fullName evidence="2">30S ribosomal protein S19</fullName>
    </alternativeName>
</protein>